<feature type="chain" id="PRO_0000424585" description="Aminopeptidase M1-B">
    <location>
        <begin position="1"/>
        <end position="875"/>
    </location>
</feature>
<feature type="region of interest" description="Required for membrane association" evidence="1">
    <location>
        <begin position="96"/>
        <end position="203"/>
    </location>
</feature>
<feature type="short sequence motif" description="Dileucine internalization motif" evidence="2">
    <location>
        <begin position="722"/>
        <end position="723"/>
    </location>
</feature>
<feature type="active site" description="Proton acceptor" evidence="3">
    <location>
        <position position="306"/>
    </location>
</feature>
<feature type="binding site" evidence="1">
    <location>
        <position position="136"/>
    </location>
    <ligand>
        <name>substrate</name>
    </ligand>
</feature>
<feature type="binding site" evidence="1">
    <location>
        <begin position="269"/>
        <end position="273"/>
    </location>
    <ligand>
        <name>substrate</name>
    </ligand>
</feature>
<feature type="binding site" evidence="3">
    <location>
        <position position="305"/>
    </location>
    <ligand>
        <name>Zn(2+)</name>
        <dbReference type="ChEBI" id="CHEBI:29105"/>
        <note>catalytic</note>
    </ligand>
</feature>
<feature type="binding site" evidence="3">
    <location>
        <position position="309"/>
    </location>
    <ligand>
        <name>Zn(2+)</name>
        <dbReference type="ChEBI" id="CHEBI:29105"/>
        <note>catalytic</note>
    </ligand>
</feature>
<feature type="binding site" evidence="3">
    <location>
        <position position="328"/>
    </location>
    <ligand>
        <name>Zn(2+)</name>
        <dbReference type="ChEBI" id="CHEBI:29105"/>
        <note>catalytic</note>
    </ligand>
</feature>
<feature type="site" description="Transition state stabilizer" evidence="1">
    <location>
        <position position="390"/>
    </location>
</feature>
<reference key="1">
    <citation type="journal article" date="2005" name="Nature">
        <title>The map-based sequence of the rice genome.</title>
        <authorList>
            <consortium name="International rice genome sequencing project (IRGSP)"/>
        </authorList>
    </citation>
    <scope>NUCLEOTIDE SEQUENCE [LARGE SCALE GENOMIC DNA]</scope>
    <source>
        <strain>cv. Nipponbare</strain>
    </source>
</reference>
<reference key="2">
    <citation type="journal article" date="2008" name="Nucleic Acids Res.">
        <title>The rice annotation project database (RAP-DB): 2008 update.</title>
        <authorList>
            <consortium name="The rice annotation project (RAP)"/>
        </authorList>
    </citation>
    <scope>GENOME REANNOTATION</scope>
    <source>
        <strain>cv. Nipponbare</strain>
    </source>
</reference>
<reference key="3">
    <citation type="journal article" date="2013" name="Rice">
        <title>Improvement of the Oryza sativa Nipponbare reference genome using next generation sequence and optical map data.</title>
        <authorList>
            <person name="Kawahara Y."/>
            <person name="de la Bastide M."/>
            <person name="Hamilton J.P."/>
            <person name="Kanamori H."/>
            <person name="McCombie W.R."/>
            <person name="Ouyang S."/>
            <person name="Schwartz D.C."/>
            <person name="Tanaka T."/>
            <person name="Wu J."/>
            <person name="Zhou S."/>
            <person name="Childs K.L."/>
            <person name="Davidson R.M."/>
            <person name="Lin H."/>
            <person name="Quesada-Ocampo L."/>
            <person name="Vaillancourt B."/>
            <person name="Sakai H."/>
            <person name="Lee S.S."/>
            <person name="Kim J."/>
            <person name="Numa H."/>
            <person name="Itoh T."/>
            <person name="Buell C.R."/>
            <person name="Matsumoto T."/>
        </authorList>
    </citation>
    <scope>GENOME REANNOTATION</scope>
    <source>
        <strain>cv. Nipponbare</strain>
    </source>
</reference>
<reference key="4">
    <citation type="journal article" date="2003" name="Science">
        <title>Collection, mapping, and annotation of over 28,000 cDNA clones from japonica rice.</title>
        <authorList>
            <consortium name="The rice full-length cDNA consortium"/>
        </authorList>
    </citation>
    <scope>NUCLEOTIDE SEQUENCE [LARGE SCALE MRNA]</scope>
    <source>
        <strain>cv. Nipponbare</strain>
    </source>
</reference>
<protein>
    <recommendedName>
        <fullName>Aminopeptidase M1-B</fullName>
        <ecNumber>3.4.11.2</ecNumber>
    </recommendedName>
    <alternativeName>
        <fullName>Alpha-aminoacylpeptide hydrolase</fullName>
    </alternativeName>
</protein>
<sequence length="875" mass="97904">MAASPEQFRGQARLPRCASPLSYDLRLRPDLAACAFSGSAAVAVAVSAPTRFLVLNAAELAVDGSSVRFQDLVPSEVVQFEEDEIVVIGFGQDLPIGEGVLKMDFTGTLNDQMRGFYRSKYEYKGESRNMAVTQFEAADARRCFPCWDEPAFKAKFKLTLEVPSELVALSNMPVIKETVHGPLKTVYYEESPLMSTYLVAIVVGLFDYIEGSTLEGTKVRVYTQVGKSNQGKFALDVAVKSLDLFKDYFATPYPLPKLDMVAIPDFAAGAMENYGLVTYRETALLYDELLSSASNKQQVAITVAHELAHQWFGNLVTMEWWTHLWLNEGFASWVSYLAVEALFPEWNNWTQFLDETTSGLRLDALAESHPIEVDINHASEIDAIFDSISYDKGASVIRMLQSYLGAERFQKALASYIKKYAYSNAKTEDLWAVLEEESGEPVKDLMTTWTKQQGYPVIYAKLDGHDLHLEQAQFLSDGSSGPGLWIVPITSCCGSYDAQKKFLLKGKTDKVHIDLTASQNAGGEKGENCWIKLNVDQTGFYRVKYDDELAAGLEKAIKANKLSLMDKIGIVEDSYSLSVARKQTLTSLLRLLNAYRNESDYTVLSHVTSVCLGIDKISVDATPELSRDIKQLLINLLLSAAKTLGWDPKEGESHLDVMLRSLLLIALVKLGHDETINEGVRRFHIFIKDRKTNILPPDTRKASYLAVMRTVTTSSRAGYDALLKIYRETAEAQEKSRILGSLSSCLDKDIVLEALNFMLTDEVRNQDAFYVLGGISLEGREVAWAWLKENWDHVLKTWPSSSLISDFVKSTVSRFTTEEKAAEVSEFFAGKTKPSFERALKQSLERVRISARWIESIRSEPNLAQTVNELLQHDM</sequence>
<name>APM1B_ORYSJ</name>
<dbReference type="EC" id="3.4.11.2"/>
<dbReference type="EMBL" id="AP003904">
    <property type="protein sequence ID" value="BAC99372.1"/>
    <property type="status" value="ALT_SEQ"/>
    <property type="molecule type" value="Genomic_DNA"/>
</dbReference>
<dbReference type="EMBL" id="AP003947">
    <property type="protein sequence ID" value="BAC99434.1"/>
    <property type="status" value="ALT_SEQ"/>
    <property type="molecule type" value="Genomic_DNA"/>
</dbReference>
<dbReference type="EMBL" id="AP008214">
    <property type="protein sequence ID" value="BAF23660.1"/>
    <property type="molecule type" value="Genomic_DNA"/>
</dbReference>
<dbReference type="EMBL" id="AP014964">
    <property type="protein sequence ID" value="BAT05325.1"/>
    <property type="molecule type" value="Genomic_DNA"/>
</dbReference>
<dbReference type="EMBL" id="AK120068">
    <property type="protein sequence ID" value="BAG99861.1"/>
    <property type="molecule type" value="mRNA"/>
</dbReference>
<dbReference type="RefSeq" id="XP_015649943.1">
    <property type="nucleotide sequence ID" value="XM_015794457.1"/>
</dbReference>
<dbReference type="SMR" id="Q0J5V5"/>
<dbReference type="FunCoup" id="Q0J5V5">
    <property type="interactions" value="1813"/>
</dbReference>
<dbReference type="STRING" id="39947.Q0J5V5"/>
<dbReference type="MEROPS" id="M01.A25"/>
<dbReference type="PaxDb" id="39947-Q0J5V5"/>
<dbReference type="EnsemblPlants" id="Os08t0398700-01">
    <property type="protein sequence ID" value="Os08t0398700-01"/>
    <property type="gene ID" value="Os08g0398700"/>
</dbReference>
<dbReference type="Gramene" id="Os08t0398700-01">
    <property type="protein sequence ID" value="Os08t0398700-01"/>
    <property type="gene ID" value="Os08g0398700"/>
</dbReference>
<dbReference type="KEGG" id="dosa:Os08g0398700"/>
<dbReference type="eggNOG" id="KOG1046">
    <property type="taxonomic scope" value="Eukaryota"/>
</dbReference>
<dbReference type="HOGENOM" id="CLU_003705_0_1_1"/>
<dbReference type="InParanoid" id="Q0J5V5"/>
<dbReference type="OMA" id="HDMAGFY"/>
<dbReference type="OrthoDB" id="10031169at2759"/>
<dbReference type="Proteomes" id="UP000000763">
    <property type="component" value="Chromosome 8"/>
</dbReference>
<dbReference type="Proteomes" id="UP000059680">
    <property type="component" value="Chromosome 8"/>
</dbReference>
<dbReference type="ExpressionAtlas" id="Q0J5V5">
    <property type="expression patterns" value="baseline and differential"/>
</dbReference>
<dbReference type="GO" id="GO:0005737">
    <property type="term" value="C:cytoplasm"/>
    <property type="evidence" value="ECO:0000318"/>
    <property type="project" value="GO_Central"/>
</dbReference>
<dbReference type="GO" id="GO:0005783">
    <property type="term" value="C:endoplasmic reticulum"/>
    <property type="evidence" value="ECO:0007669"/>
    <property type="project" value="UniProtKB-KW"/>
</dbReference>
<dbReference type="GO" id="GO:0005615">
    <property type="term" value="C:extracellular space"/>
    <property type="evidence" value="ECO:0000318"/>
    <property type="project" value="GO_Central"/>
</dbReference>
<dbReference type="GO" id="GO:0016020">
    <property type="term" value="C:membrane"/>
    <property type="evidence" value="ECO:0000318"/>
    <property type="project" value="GO_Central"/>
</dbReference>
<dbReference type="GO" id="GO:0016285">
    <property type="term" value="F:alanyl aminopeptidase activity"/>
    <property type="evidence" value="ECO:0007669"/>
    <property type="project" value="UniProtKB-EC"/>
</dbReference>
<dbReference type="GO" id="GO:0070006">
    <property type="term" value="F:metalloaminopeptidase activity"/>
    <property type="evidence" value="ECO:0000318"/>
    <property type="project" value="GO_Central"/>
</dbReference>
<dbReference type="GO" id="GO:0042277">
    <property type="term" value="F:peptide binding"/>
    <property type="evidence" value="ECO:0000318"/>
    <property type="project" value="GO_Central"/>
</dbReference>
<dbReference type="GO" id="GO:0008270">
    <property type="term" value="F:zinc ion binding"/>
    <property type="evidence" value="ECO:0000318"/>
    <property type="project" value="GO_Central"/>
</dbReference>
<dbReference type="GO" id="GO:0043171">
    <property type="term" value="P:peptide catabolic process"/>
    <property type="evidence" value="ECO:0000318"/>
    <property type="project" value="GO_Central"/>
</dbReference>
<dbReference type="GO" id="GO:0006508">
    <property type="term" value="P:proteolysis"/>
    <property type="evidence" value="ECO:0000318"/>
    <property type="project" value="GO_Central"/>
</dbReference>
<dbReference type="CDD" id="cd09601">
    <property type="entry name" value="M1_APN-Q_like"/>
    <property type="match status" value="1"/>
</dbReference>
<dbReference type="FunFam" id="1.10.390.10:FF:000001">
    <property type="entry name" value="Aminopeptidase"/>
    <property type="match status" value="1"/>
</dbReference>
<dbReference type="FunFam" id="1.25.50.20:FF:000002">
    <property type="entry name" value="Aminopeptidase"/>
    <property type="match status" value="1"/>
</dbReference>
<dbReference type="FunFam" id="2.60.40.1730:FF:000009">
    <property type="entry name" value="Aminopeptidase"/>
    <property type="match status" value="1"/>
</dbReference>
<dbReference type="FunFam" id="2.60.40.1910:FF:000007">
    <property type="entry name" value="Aminopeptidase"/>
    <property type="match status" value="1"/>
</dbReference>
<dbReference type="Gene3D" id="1.25.50.20">
    <property type="match status" value="1"/>
</dbReference>
<dbReference type="Gene3D" id="2.60.40.1910">
    <property type="match status" value="1"/>
</dbReference>
<dbReference type="Gene3D" id="1.10.390.10">
    <property type="entry name" value="Neutral Protease Domain 2"/>
    <property type="match status" value="1"/>
</dbReference>
<dbReference type="Gene3D" id="2.60.40.1730">
    <property type="entry name" value="tricorn interacting facor f3 domain"/>
    <property type="match status" value="1"/>
</dbReference>
<dbReference type="InterPro" id="IPR045357">
    <property type="entry name" value="Aminopeptidase_N-like_N"/>
</dbReference>
<dbReference type="InterPro" id="IPR042097">
    <property type="entry name" value="Aminopeptidase_N-like_N_sf"/>
</dbReference>
<dbReference type="InterPro" id="IPR024571">
    <property type="entry name" value="ERAP1-like_C_dom"/>
</dbReference>
<dbReference type="InterPro" id="IPR034016">
    <property type="entry name" value="M1_APN-typ"/>
</dbReference>
<dbReference type="InterPro" id="IPR001930">
    <property type="entry name" value="Peptidase_M1"/>
</dbReference>
<dbReference type="InterPro" id="IPR050344">
    <property type="entry name" value="Peptidase_M1_aminopeptidases"/>
</dbReference>
<dbReference type="InterPro" id="IPR014782">
    <property type="entry name" value="Peptidase_M1_dom"/>
</dbReference>
<dbReference type="InterPro" id="IPR027268">
    <property type="entry name" value="Peptidase_M4/M1_CTD_sf"/>
</dbReference>
<dbReference type="PANTHER" id="PTHR11533:SF298">
    <property type="entry name" value="AMINOPEPTIDASE M1-B"/>
    <property type="match status" value="1"/>
</dbReference>
<dbReference type="PANTHER" id="PTHR11533">
    <property type="entry name" value="PROTEASE M1 ZINC METALLOPROTEASE"/>
    <property type="match status" value="1"/>
</dbReference>
<dbReference type="Pfam" id="PF11838">
    <property type="entry name" value="ERAP1_C"/>
    <property type="match status" value="1"/>
</dbReference>
<dbReference type="Pfam" id="PF01433">
    <property type="entry name" value="Peptidase_M1"/>
    <property type="match status" value="1"/>
</dbReference>
<dbReference type="Pfam" id="PF17900">
    <property type="entry name" value="Peptidase_M1_N"/>
    <property type="match status" value="1"/>
</dbReference>
<dbReference type="PRINTS" id="PR00756">
    <property type="entry name" value="ALADIPTASE"/>
</dbReference>
<dbReference type="SUPFAM" id="SSF63737">
    <property type="entry name" value="Leukotriene A4 hydrolase N-terminal domain"/>
    <property type="match status" value="1"/>
</dbReference>
<dbReference type="SUPFAM" id="SSF55486">
    <property type="entry name" value="Metalloproteases ('zincins'), catalytic domain"/>
    <property type="match status" value="1"/>
</dbReference>
<dbReference type="PROSITE" id="PS00142">
    <property type="entry name" value="ZINC_PROTEASE"/>
    <property type="match status" value="1"/>
</dbReference>
<comment type="catalytic activity">
    <reaction>
        <text>Release of an N-terminal amino acid, Xaa-|-Yaa- from a peptide, amide or arylamide. Xaa is preferably Ala, but may be most amino acids including Pro (slow action). When a terminal hydrophobic residue is followed by a prolyl residue, the two may be released as an intact Xaa-Pro dipeptide.</text>
        <dbReference type="EC" id="3.4.11.2"/>
    </reaction>
</comment>
<comment type="cofactor">
    <cofactor evidence="1">
        <name>Zn(2+)</name>
        <dbReference type="ChEBI" id="CHEBI:29105"/>
    </cofactor>
    <text evidence="1">Binds 1 zinc ion per subunit.</text>
</comment>
<comment type="subunit">
    <text evidence="1">Homodimer.</text>
</comment>
<comment type="subcellular location">
    <subcellularLocation>
        <location evidence="1">Membrane</location>
        <topology evidence="1">Peripheral membrane protein</topology>
    </subcellularLocation>
    <subcellularLocation>
        <location evidence="1">Microsome membrane</location>
        <topology evidence="1">Peripheral membrane protein</topology>
    </subcellularLocation>
    <subcellularLocation>
        <location evidence="1">Cytoplasm</location>
    </subcellularLocation>
    <text>The dileucine internalization motif may be involved in intracellular sequestration.</text>
</comment>
<comment type="domain">
    <text evidence="1">Dileucine motif seems to be involved in protein-protein interactions.</text>
</comment>
<comment type="similarity">
    <text evidence="4">Belongs to the peptidase M1 family.</text>
</comment>
<comment type="sequence caution" evidence="4">
    <conflict type="erroneous gene model prediction">
        <sequence resource="EMBL-CDS" id="BAC99372"/>
    </conflict>
</comment>
<comment type="sequence caution" evidence="4">
    <conflict type="erroneous gene model prediction">
        <sequence resource="EMBL-CDS" id="BAC99434"/>
    </conflict>
</comment>
<gene>
    <name type="ordered locus">Os08g0398700</name>
    <name type="ordered locus">LOC_Os08g30810</name>
    <name type="ORF">OJ1051_A08.7</name>
    <name type="ORF">OJ1198_B10.19</name>
</gene>
<evidence type="ECO:0000250" key="1"/>
<evidence type="ECO:0000255" key="2"/>
<evidence type="ECO:0000255" key="3">
    <source>
        <dbReference type="PROSITE-ProRule" id="PRU10095"/>
    </source>
</evidence>
<evidence type="ECO:0000305" key="4"/>
<proteinExistence type="evidence at transcript level"/>
<keyword id="KW-0031">Aminopeptidase</keyword>
<keyword id="KW-0963">Cytoplasm</keyword>
<keyword id="KW-0256">Endoplasmic reticulum</keyword>
<keyword id="KW-0378">Hydrolase</keyword>
<keyword id="KW-0472">Membrane</keyword>
<keyword id="KW-0479">Metal-binding</keyword>
<keyword id="KW-0482">Metalloprotease</keyword>
<keyword id="KW-0492">Microsome</keyword>
<keyword id="KW-0645">Protease</keyword>
<keyword id="KW-1185">Reference proteome</keyword>
<keyword id="KW-0862">Zinc</keyword>
<accession>Q0J5V5</accession>
<accession>A0A0P0XFB8</accession>
<accession>Q6ZIV5</accession>
<organism>
    <name type="scientific">Oryza sativa subsp. japonica</name>
    <name type="common">Rice</name>
    <dbReference type="NCBI Taxonomy" id="39947"/>
    <lineage>
        <taxon>Eukaryota</taxon>
        <taxon>Viridiplantae</taxon>
        <taxon>Streptophyta</taxon>
        <taxon>Embryophyta</taxon>
        <taxon>Tracheophyta</taxon>
        <taxon>Spermatophyta</taxon>
        <taxon>Magnoliopsida</taxon>
        <taxon>Liliopsida</taxon>
        <taxon>Poales</taxon>
        <taxon>Poaceae</taxon>
        <taxon>BOP clade</taxon>
        <taxon>Oryzoideae</taxon>
        <taxon>Oryzeae</taxon>
        <taxon>Oryzinae</taxon>
        <taxon>Oryza</taxon>
        <taxon>Oryza sativa</taxon>
    </lineage>
</organism>